<organism evidence="8">
    <name type="scientific">Chlamydomonas reinhardtii</name>
    <name type="common">Chlamydomonas smithii</name>
    <dbReference type="NCBI Taxonomy" id="3055"/>
    <lineage>
        <taxon>Eukaryota</taxon>
        <taxon>Viridiplantae</taxon>
        <taxon>Chlorophyta</taxon>
        <taxon>core chlorophytes</taxon>
        <taxon>Chlorophyceae</taxon>
        <taxon>CS clade</taxon>
        <taxon>Chlamydomonadales</taxon>
        <taxon>Chlamydomonadaceae</taxon>
        <taxon>Chlamydomonas</taxon>
    </lineage>
</organism>
<name>RSP5_CHLRE</name>
<accession>Q27YU7</accession>
<accession>A8IY36</accession>
<protein>
    <recommendedName>
        <fullName evidence="5">Flagellar radial spoke protein 5</fullName>
        <ecNumber evidence="6">1.-.-.-</ecNumber>
    </recommendedName>
</protein>
<evidence type="ECO:0000255" key="1"/>
<evidence type="ECO:0000256" key="2">
    <source>
        <dbReference type="SAM" id="MobiDB-lite"/>
    </source>
</evidence>
<evidence type="ECO:0000269" key="3">
    <source>
    </source>
</evidence>
<evidence type="ECO:0000269" key="4">
    <source>
    </source>
</evidence>
<evidence type="ECO:0000303" key="5">
    <source>
    </source>
</evidence>
<evidence type="ECO:0000305" key="6"/>
<evidence type="ECO:0000305" key="7">
    <source>
    </source>
</evidence>
<evidence type="ECO:0000312" key="8">
    <source>
        <dbReference type="EMBL" id="ABC02018.1"/>
    </source>
</evidence>
<evidence type="ECO:0000312" key="9">
    <source>
        <dbReference type="EMBL" id="EDP03020.1"/>
    </source>
</evidence>
<evidence type="ECO:0007829" key="10">
    <source>
        <dbReference type="PDB" id="7JRJ"/>
    </source>
</evidence>
<evidence type="ECO:0007829" key="11">
    <source>
        <dbReference type="PDB" id="7JTK"/>
    </source>
</evidence>
<keyword id="KW-0002">3D-structure</keyword>
<keyword id="KW-0966">Cell projection</keyword>
<keyword id="KW-0969">Cilium</keyword>
<keyword id="KW-0175">Coiled coil</keyword>
<keyword id="KW-0963">Cytoplasm</keyword>
<keyword id="KW-0206">Cytoskeleton</keyword>
<keyword id="KW-0282">Flagellum</keyword>
<keyword id="KW-0488">Methylation</keyword>
<keyword id="KW-0560">Oxidoreductase</keyword>
<feature type="chain" id="PRO_0000431951" description="Flagellar radial spoke protein 5">
    <location>
        <begin position="1"/>
        <end position="527"/>
    </location>
</feature>
<feature type="region of interest" description="Disordered" evidence="2">
    <location>
        <begin position="1"/>
        <end position="22"/>
    </location>
</feature>
<feature type="coiled-coil region" evidence="1">
    <location>
        <begin position="101"/>
        <end position="153"/>
    </location>
</feature>
<feature type="modified residue" description="Asymmetric dimethylarginine" evidence="4">
    <location>
        <position position="191"/>
    </location>
</feature>
<feature type="modified residue" description="Asymmetric dimethylarginine" evidence="4">
    <location>
        <position position="366"/>
    </location>
</feature>
<feature type="helix" evidence="10">
    <location>
        <begin position="21"/>
        <end position="25"/>
    </location>
</feature>
<feature type="strand" evidence="10">
    <location>
        <begin position="32"/>
        <end position="35"/>
    </location>
</feature>
<feature type="strand" evidence="10">
    <location>
        <begin position="38"/>
        <end position="40"/>
    </location>
</feature>
<feature type="strand" evidence="10">
    <location>
        <begin position="42"/>
        <end position="47"/>
    </location>
</feature>
<feature type="helix" evidence="10">
    <location>
        <begin position="53"/>
        <end position="56"/>
    </location>
</feature>
<feature type="strand" evidence="10">
    <location>
        <begin position="82"/>
        <end position="84"/>
    </location>
</feature>
<feature type="helix" evidence="10">
    <location>
        <begin position="85"/>
        <end position="94"/>
    </location>
</feature>
<feature type="helix" evidence="10">
    <location>
        <begin position="98"/>
        <end position="116"/>
    </location>
</feature>
<feature type="helix" evidence="10">
    <location>
        <begin position="127"/>
        <end position="155"/>
    </location>
</feature>
<feature type="turn" evidence="10">
    <location>
        <begin position="157"/>
        <end position="160"/>
    </location>
</feature>
<feature type="helix" evidence="10">
    <location>
        <begin position="162"/>
        <end position="172"/>
    </location>
</feature>
<feature type="strand" evidence="10">
    <location>
        <begin position="177"/>
        <end position="180"/>
    </location>
</feature>
<feature type="helix" evidence="10">
    <location>
        <begin position="190"/>
        <end position="193"/>
    </location>
</feature>
<feature type="helix" evidence="10">
    <location>
        <begin position="208"/>
        <end position="225"/>
    </location>
</feature>
<feature type="strand" evidence="10">
    <location>
        <begin position="231"/>
        <end position="236"/>
    </location>
</feature>
<feature type="helix" evidence="10">
    <location>
        <begin position="243"/>
        <end position="248"/>
    </location>
</feature>
<feature type="helix" evidence="10">
    <location>
        <begin position="250"/>
        <end position="268"/>
    </location>
</feature>
<feature type="turn" evidence="10">
    <location>
        <begin position="270"/>
        <end position="272"/>
    </location>
</feature>
<feature type="strand" evidence="10">
    <location>
        <begin position="277"/>
        <end position="279"/>
    </location>
</feature>
<feature type="strand" evidence="10">
    <location>
        <begin position="284"/>
        <end position="290"/>
    </location>
</feature>
<feature type="turn" evidence="10">
    <location>
        <begin position="294"/>
        <end position="296"/>
    </location>
</feature>
<feature type="helix" evidence="10">
    <location>
        <begin position="300"/>
        <end position="309"/>
    </location>
</feature>
<feature type="strand" evidence="10">
    <location>
        <begin position="313"/>
        <end position="315"/>
    </location>
</feature>
<feature type="strand" evidence="10">
    <location>
        <begin position="324"/>
        <end position="327"/>
    </location>
</feature>
<feature type="strand" evidence="10">
    <location>
        <begin position="330"/>
        <end position="332"/>
    </location>
</feature>
<feature type="strand" evidence="10">
    <location>
        <begin position="334"/>
        <end position="338"/>
    </location>
</feature>
<feature type="helix" evidence="10">
    <location>
        <begin position="343"/>
        <end position="349"/>
    </location>
</feature>
<feature type="strand" evidence="10">
    <location>
        <begin position="356"/>
        <end position="359"/>
    </location>
</feature>
<feature type="helix" evidence="10">
    <location>
        <begin position="369"/>
        <end position="377"/>
    </location>
</feature>
<feature type="strand" evidence="10">
    <location>
        <begin position="381"/>
        <end position="384"/>
    </location>
</feature>
<feature type="turn" evidence="10">
    <location>
        <begin position="387"/>
        <end position="391"/>
    </location>
</feature>
<feature type="strand" evidence="10">
    <location>
        <begin position="393"/>
        <end position="395"/>
    </location>
</feature>
<feature type="turn" evidence="10">
    <location>
        <begin position="405"/>
        <end position="407"/>
    </location>
</feature>
<feature type="strand" evidence="11">
    <location>
        <begin position="410"/>
        <end position="413"/>
    </location>
</feature>
<feature type="helix" evidence="10">
    <location>
        <begin position="415"/>
        <end position="425"/>
    </location>
</feature>
<feature type="helix" evidence="10">
    <location>
        <begin position="428"/>
        <end position="444"/>
    </location>
</feature>
<feature type="helix" evidence="10">
    <location>
        <begin position="449"/>
        <end position="458"/>
    </location>
</feature>
<feature type="turn" evidence="10">
    <location>
        <begin position="459"/>
        <end position="461"/>
    </location>
</feature>
<feature type="strand" evidence="10">
    <location>
        <begin position="465"/>
        <end position="467"/>
    </location>
</feature>
<feature type="turn" evidence="10">
    <location>
        <begin position="474"/>
        <end position="479"/>
    </location>
</feature>
<feature type="turn" evidence="10">
    <location>
        <begin position="481"/>
        <end position="484"/>
    </location>
</feature>
<feature type="helix" evidence="10">
    <location>
        <begin position="486"/>
        <end position="489"/>
    </location>
</feature>
<feature type="helix" evidence="10">
    <location>
        <begin position="497"/>
        <end position="499"/>
    </location>
</feature>
<feature type="strand" evidence="10">
    <location>
        <begin position="500"/>
        <end position="503"/>
    </location>
</feature>
<feature type="helix" evidence="10">
    <location>
        <begin position="508"/>
        <end position="514"/>
    </location>
</feature>
<dbReference type="EC" id="1.-.-.-" evidence="6"/>
<dbReference type="EMBL" id="DQ298247">
    <property type="protein sequence ID" value="ABC02018.1"/>
    <property type="molecule type" value="mRNA"/>
</dbReference>
<dbReference type="EMBL" id="DS496127">
    <property type="protein sequence ID" value="EDP03020.1"/>
    <property type="status" value="ALT_SEQ"/>
    <property type="molecule type" value="Genomic_DNA"/>
</dbReference>
<dbReference type="PDB" id="7JRJ">
    <property type="method" value="EM"/>
    <property type="resolution" value="3.03 A"/>
    <property type="chains" value="H=1-527"/>
</dbReference>
<dbReference type="PDB" id="7JTK">
    <property type="method" value="EM"/>
    <property type="resolution" value="3.20 A"/>
    <property type="chains" value="I/J=1-521"/>
</dbReference>
<dbReference type="PDB" id="8GLV">
    <property type="method" value="EM"/>
    <property type="resolution" value="3.10 A"/>
    <property type="chains" value="H0/Hz/JT/JZ=1-521"/>
</dbReference>
<dbReference type="PDBsum" id="7JRJ"/>
<dbReference type="PDBsum" id="7JTK"/>
<dbReference type="PDBsum" id="8GLV"/>
<dbReference type="EMDB" id="EMD-22446"/>
<dbReference type="EMDB" id="EMD-22475"/>
<dbReference type="EMDB" id="EMD-40220"/>
<dbReference type="SMR" id="Q27YU7"/>
<dbReference type="iPTMnet" id="Q27YU7"/>
<dbReference type="PaxDb" id="3055-EDP03020"/>
<dbReference type="ProMEX" id="Q27YU7"/>
<dbReference type="KEGG" id="cre:CHLRE_12g544000v5"/>
<dbReference type="eggNOG" id="KOG1575">
    <property type="taxonomic scope" value="Eukaryota"/>
</dbReference>
<dbReference type="HOGENOM" id="CLU_523131_0_0_1"/>
<dbReference type="GO" id="GO:0005737">
    <property type="term" value="C:cytoplasm"/>
    <property type="evidence" value="ECO:0007669"/>
    <property type="project" value="UniProtKB-KW"/>
</dbReference>
<dbReference type="GO" id="GO:0005856">
    <property type="term" value="C:cytoskeleton"/>
    <property type="evidence" value="ECO:0007669"/>
    <property type="project" value="UniProtKB-KW"/>
</dbReference>
<dbReference type="GO" id="GO:0031514">
    <property type="term" value="C:motile cilium"/>
    <property type="evidence" value="ECO:0007669"/>
    <property type="project" value="UniProtKB-KW"/>
</dbReference>
<dbReference type="GO" id="GO:0016491">
    <property type="term" value="F:oxidoreductase activity"/>
    <property type="evidence" value="ECO:0007669"/>
    <property type="project" value="UniProtKB-KW"/>
</dbReference>
<dbReference type="Gene3D" id="3.20.20.100">
    <property type="entry name" value="NADP-dependent oxidoreductase domain"/>
    <property type="match status" value="1"/>
</dbReference>
<dbReference type="InterPro" id="IPR050523">
    <property type="entry name" value="AKR_Detox_Biosynth"/>
</dbReference>
<dbReference type="InterPro" id="IPR023210">
    <property type="entry name" value="NADP_OxRdtase_dom"/>
</dbReference>
<dbReference type="InterPro" id="IPR036812">
    <property type="entry name" value="NADP_OxRdtase_dom_sf"/>
</dbReference>
<dbReference type="PANTHER" id="PTHR43364:SF4">
    <property type="entry name" value="NAD(P)-LINKED OXIDOREDUCTASE SUPERFAMILY PROTEIN"/>
    <property type="match status" value="1"/>
</dbReference>
<dbReference type="PANTHER" id="PTHR43364">
    <property type="entry name" value="NADH-SPECIFIC METHYLGLYOXAL REDUCTASE-RELATED"/>
    <property type="match status" value="1"/>
</dbReference>
<dbReference type="Pfam" id="PF00248">
    <property type="entry name" value="Aldo_ket_red"/>
    <property type="match status" value="1"/>
</dbReference>
<dbReference type="SUPFAM" id="SSF51430">
    <property type="entry name" value="NAD(P)-linked oxidoreductase"/>
    <property type="match status" value="1"/>
</dbReference>
<gene>
    <name evidence="5" type="primary">RSP5</name>
    <name evidence="9" type="ORF">CHLREDRAFT_190792</name>
</gene>
<reference key="1">
    <citation type="journal article" date="2006" name="J. Cell Sci.">
        <title>Radial spoke proteins of Chlamydomonas flagella.</title>
        <authorList>
            <person name="Yang P."/>
            <person name="Diener D.R."/>
            <person name="Yang C."/>
            <person name="Kohno T."/>
            <person name="Pazour G.J."/>
            <person name="Dienes J.M."/>
            <person name="Agrin N.S."/>
            <person name="King S.M."/>
            <person name="Sale W.S."/>
            <person name="Kamiya R."/>
            <person name="Rosenbaum J.L."/>
            <person name="Witman G.B."/>
        </authorList>
    </citation>
    <scope>NUCLEOTIDE SEQUENCE [GENOMIC DNA]</scope>
    <scope>IDENTIFICATION BY MASS SPECTROMETRY</scope>
    <scope>FUNCTION</scope>
    <scope>SUBCELLULAR LOCATION</scope>
</reference>
<reference key="2">
    <citation type="journal article" date="2007" name="Science">
        <title>The Chlamydomonas genome reveals the evolution of key animal and plant functions.</title>
        <authorList>
            <person name="Merchant S.S."/>
            <person name="Prochnik S.E."/>
            <person name="Vallon O."/>
            <person name="Harris E.H."/>
            <person name="Karpowicz S.J."/>
            <person name="Witman G.B."/>
            <person name="Terry A."/>
            <person name="Salamov A."/>
            <person name="Fritz-Laylin L.K."/>
            <person name="Marechal-Drouard L."/>
            <person name="Marshall W.F."/>
            <person name="Qu L.H."/>
            <person name="Nelson D.R."/>
            <person name="Sanderfoot A.A."/>
            <person name="Spalding M.H."/>
            <person name="Kapitonov V.V."/>
            <person name="Ren Q."/>
            <person name="Ferris P."/>
            <person name="Lindquist E."/>
            <person name="Shapiro H."/>
            <person name="Lucas S.M."/>
            <person name="Grimwood J."/>
            <person name="Schmutz J."/>
            <person name="Cardol P."/>
            <person name="Cerutti H."/>
            <person name="Chanfreau G."/>
            <person name="Chen C.L."/>
            <person name="Cognat V."/>
            <person name="Croft M.T."/>
            <person name="Dent R."/>
            <person name="Dutcher S."/>
            <person name="Fernandez E."/>
            <person name="Fukuzawa H."/>
            <person name="Gonzalez-Ballester D."/>
            <person name="Gonzalez-Halphen D."/>
            <person name="Hallmann A."/>
            <person name="Hanikenne M."/>
            <person name="Hippler M."/>
            <person name="Inwood W."/>
            <person name="Jabbari K."/>
            <person name="Kalanon M."/>
            <person name="Kuras R."/>
            <person name="Lefebvre P.A."/>
            <person name="Lemaire S.D."/>
            <person name="Lobanov A.V."/>
            <person name="Lohr M."/>
            <person name="Manuell A."/>
            <person name="Meier I."/>
            <person name="Mets L."/>
            <person name="Mittag M."/>
            <person name="Mittelmeier T."/>
            <person name="Moroney J.V."/>
            <person name="Moseley J."/>
            <person name="Napoli C."/>
            <person name="Nedelcu A.M."/>
            <person name="Niyogi K."/>
            <person name="Novoselov S.V."/>
            <person name="Paulsen I.T."/>
            <person name="Pazour G.J."/>
            <person name="Purton S."/>
            <person name="Ral J.P."/>
            <person name="Riano-Pachon D.M."/>
            <person name="Riekhof W."/>
            <person name="Rymarquis L."/>
            <person name="Schroda M."/>
            <person name="Stern D."/>
            <person name="Umen J."/>
            <person name="Willows R."/>
            <person name="Wilson N."/>
            <person name="Zimmer S.L."/>
            <person name="Allmer J."/>
            <person name="Balk J."/>
            <person name="Bisova K."/>
            <person name="Chen C.J."/>
            <person name="Elias M."/>
            <person name="Gendler K."/>
            <person name="Hauser C."/>
            <person name="Lamb M.R."/>
            <person name="Ledford H."/>
            <person name="Long J.C."/>
            <person name="Minagawa J."/>
            <person name="Page M.D."/>
            <person name="Pan J."/>
            <person name="Pootakham W."/>
            <person name="Roje S."/>
            <person name="Rose A."/>
            <person name="Stahlberg E."/>
            <person name="Terauchi A.M."/>
            <person name="Yang P."/>
            <person name="Ball S."/>
            <person name="Bowler C."/>
            <person name="Dieckmann C.L."/>
            <person name="Gladyshev V.N."/>
            <person name="Green P."/>
            <person name="Jorgensen R."/>
            <person name="Mayfield S."/>
            <person name="Mueller-Roeber B."/>
            <person name="Rajamani S."/>
            <person name="Sayre R.T."/>
            <person name="Brokstein P."/>
            <person name="Dubchak I."/>
            <person name="Goodstein D."/>
            <person name="Hornick L."/>
            <person name="Huang Y.W."/>
            <person name="Jhaveri J."/>
            <person name="Luo Y."/>
            <person name="Martinez D."/>
            <person name="Ngau W.C."/>
            <person name="Otillar B."/>
            <person name="Poliakov A."/>
            <person name="Porter A."/>
            <person name="Szajkowski L."/>
            <person name="Werner G."/>
            <person name="Zhou K."/>
            <person name="Grigoriev I.V."/>
            <person name="Rokhsar D.S."/>
            <person name="Grossman A.R."/>
        </authorList>
    </citation>
    <scope>NUCLEOTIDE SEQUENCE [LARGE SCALE GENOMIC DNA]</scope>
    <source>
        <strain>CC-503</strain>
        <strain>cw92</strain>
    </source>
</reference>
<reference key="3">
    <citation type="journal article" date="2013" name="Biochemistry">
        <title>Methylation of structural components of the axoneme occurs during flagellar disassembly.</title>
        <authorList>
            <person name="Werner-Peterson R."/>
            <person name="Sloboda R.D."/>
        </authorList>
    </citation>
    <scope>METHYLATION AT ARG-191 AND ARG-366</scope>
</reference>
<proteinExistence type="evidence at protein level"/>
<comment type="function">
    <text evidence="7">Flagellar radial spokes contribute to the regulation of dynein arm activity and thus the pattern of flagellar bending. They consist of a thin stalk, which is attached to the a subfiber of the outer doublet microtubule, and a bulbous head, which is attached to the stalk and appears to interact with the projections from the central pair of microtubules.</text>
</comment>
<comment type="subcellular location">
    <subcellularLocation>
        <location evidence="3">Cytoplasm</location>
        <location evidence="3">Cytoskeleton</location>
        <location evidence="3">Flagellum axoneme</location>
    </subcellularLocation>
    <text evidence="3">Radial spoke.</text>
</comment>
<comment type="PTM">
    <text evidence="4">Asymmetrically dimethylated at Arg-191 and Arg-366 during flagellum resorption. Probably methylated by PRMT1.</text>
</comment>
<comment type="similarity">
    <text evidence="6">Belongs to the aldo/keto reductase family.</text>
</comment>
<comment type="sequence caution" evidence="6">
    <conflict type="erroneous gene model prediction">
        <sequence resource="EMBL-CDS" id="EDP03020"/>
    </conflict>
</comment>
<sequence length="527" mass="55880">MSEPGEEPVAAPAGPAPDPVLNELYGSERPAVELLPGVPLSPIVNSCWLPADAKAMLAESWIPVPPEDAGEEAGPPPPAFEAAAPEYNELVRRLAKTAPFRKWNELTIQAKQLEQEVAGLKGPDAEAKQAELENVKVQIADAEAAVAEVKQSFSDDPLSLTGWMQALTDLADGGMTTFEVSGQGWPYCSLRQLFGEMPSAAPPAGFFDGVERVLGTFKRRYEKERGPGSVQLMLKLAPNVFSDAWSTGGAPAAVAAVEAYVERARANVFGPDGGVTPEGVPEPLDLVQLVWWDFAAADPLPVLKALQRMATDQLQVDEDSGEVSVSEPKKIRGIGLVDFPADRLKAAIQAGVPITCVQVEHSVLVRSAQPVLDLCAKYGIKVLARGGTLGGLLSAKYLGAPPPDPVRGDADLDSVPGCLDAVNNVGGWARLQAALAVIKGIADKHGVKPETVALRWQIDAGCFPLVTTRWSSRVWRQFGYEGWSSFEVSGGRPGVDGPLFQVESFLDVEDVRALAGLAAVHLGPKAG</sequence>